<protein>
    <recommendedName>
        <fullName evidence="1">Histidinol dehydrogenase</fullName>
        <shortName evidence="1">HDH</shortName>
        <ecNumber evidence="1">1.1.1.23</ecNumber>
    </recommendedName>
</protein>
<evidence type="ECO:0000255" key="1">
    <source>
        <dbReference type="HAMAP-Rule" id="MF_01024"/>
    </source>
</evidence>
<organism>
    <name type="scientific">Dehalococcoides mccartyi (strain ATCC BAA-2266 / KCTC 15142 / 195)</name>
    <name type="common">Dehalococcoides ethenogenes (strain 195)</name>
    <dbReference type="NCBI Taxonomy" id="243164"/>
    <lineage>
        <taxon>Bacteria</taxon>
        <taxon>Bacillati</taxon>
        <taxon>Chloroflexota</taxon>
        <taxon>Dehalococcoidia</taxon>
        <taxon>Dehalococcoidales</taxon>
        <taxon>Dehalococcoidaceae</taxon>
        <taxon>Dehalococcoides</taxon>
    </lineage>
</organism>
<sequence length="436" mass="46836">MEIIRGFAPAEKRLSRRDKAGFFLDETQRAELAKRLGVDPEKAVNGIIDDIRKQGDKAVLEYTLKFDRAAISKLEVSPAEIKQAAGEIPAELFEALKLAATQVRAYHHFQKEAVWKAAEIMQGKQLIRPLERVGLYVPGGKAFYPSTVLMTAIPAKEAGVDEIILVTPPGADGKIPAPTLAAAYIAGVDKVFACGGAQAVAALAFGTKSIPKVDKICGPGNIFVTLAKKAVFGVVDIDGLQGPSEVLILADQYANAEYCASDILAQAEHDVLASPIMVTTSAELAKRVNDIVETKAGSCARKDIIRQSLRDNGLIAVVDNMDEAIKLANMYATEHLCLLVKDSEQYLSRINHAGCIFYGEKASVVMGDYVAGPSHALPTSGTARFSSPLNILDFVKYIDIVNVSKEEVTKLGKAAVTIARAEGLECHAEAALKRME</sequence>
<name>HISX_DEHM1</name>
<keyword id="KW-0028">Amino-acid biosynthesis</keyword>
<keyword id="KW-0368">Histidine biosynthesis</keyword>
<keyword id="KW-0479">Metal-binding</keyword>
<keyword id="KW-0520">NAD</keyword>
<keyword id="KW-0560">Oxidoreductase</keyword>
<keyword id="KW-0862">Zinc</keyword>
<reference key="1">
    <citation type="journal article" date="2005" name="Science">
        <title>Genome sequence of the PCE-dechlorinating bacterium Dehalococcoides ethenogenes.</title>
        <authorList>
            <person name="Seshadri R."/>
            <person name="Adrian L."/>
            <person name="Fouts D.E."/>
            <person name="Eisen J.A."/>
            <person name="Phillippy A.M."/>
            <person name="Methe B.A."/>
            <person name="Ward N.L."/>
            <person name="Nelson W.C."/>
            <person name="DeBoy R.T."/>
            <person name="Khouri H.M."/>
            <person name="Kolonay J.F."/>
            <person name="Dodson R.J."/>
            <person name="Daugherty S.C."/>
            <person name="Brinkac L.M."/>
            <person name="Sullivan S.A."/>
            <person name="Madupu R."/>
            <person name="Nelson K.E."/>
            <person name="Kang K.H."/>
            <person name="Impraim M."/>
            <person name="Tran K."/>
            <person name="Robinson J.M."/>
            <person name="Forberger H.A."/>
            <person name="Fraser C.M."/>
            <person name="Zinder S.H."/>
            <person name="Heidelberg J.F."/>
        </authorList>
    </citation>
    <scope>NUCLEOTIDE SEQUENCE [LARGE SCALE GENOMIC DNA]</scope>
    <source>
        <strain>ATCC BAA-2266 / KCTC 15142 / 195</strain>
    </source>
</reference>
<accession>Q3Z878</accession>
<dbReference type="EC" id="1.1.1.23" evidence="1"/>
<dbReference type="EMBL" id="CP000027">
    <property type="protein sequence ID" value="AAW39898.1"/>
    <property type="molecule type" value="Genomic_DNA"/>
</dbReference>
<dbReference type="RefSeq" id="WP_010936572.1">
    <property type="nucleotide sequence ID" value="NC_002936.3"/>
</dbReference>
<dbReference type="SMR" id="Q3Z878"/>
<dbReference type="FunCoup" id="Q3Z878">
    <property type="interactions" value="362"/>
</dbReference>
<dbReference type="STRING" id="243164.DET0844"/>
<dbReference type="GeneID" id="3229860"/>
<dbReference type="KEGG" id="det:DET0844"/>
<dbReference type="PATRIC" id="fig|243164.10.peg.802"/>
<dbReference type="eggNOG" id="COG0141">
    <property type="taxonomic scope" value="Bacteria"/>
</dbReference>
<dbReference type="HOGENOM" id="CLU_006732_3_3_0"/>
<dbReference type="InParanoid" id="Q3Z878"/>
<dbReference type="UniPathway" id="UPA00031">
    <property type="reaction ID" value="UER00014"/>
</dbReference>
<dbReference type="Proteomes" id="UP000008289">
    <property type="component" value="Chromosome"/>
</dbReference>
<dbReference type="GO" id="GO:0005829">
    <property type="term" value="C:cytosol"/>
    <property type="evidence" value="ECO:0007669"/>
    <property type="project" value="TreeGrafter"/>
</dbReference>
<dbReference type="GO" id="GO:0004399">
    <property type="term" value="F:histidinol dehydrogenase activity"/>
    <property type="evidence" value="ECO:0007669"/>
    <property type="project" value="UniProtKB-UniRule"/>
</dbReference>
<dbReference type="GO" id="GO:0051287">
    <property type="term" value="F:NAD binding"/>
    <property type="evidence" value="ECO:0007669"/>
    <property type="project" value="InterPro"/>
</dbReference>
<dbReference type="GO" id="GO:0008270">
    <property type="term" value="F:zinc ion binding"/>
    <property type="evidence" value="ECO:0007669"/>
    <property type="project" value="UniProtKB-UniRule"/>
</dbReference>
<dbReference type="GO" id="GO:0000105">
    <property type="term" value="P:L-histidine biosynthetic process"/>
    <property type="evidence" value="ECO:0007669"/>
    <property type="project" value="UniProtKB-UniRule"/>
</dbReference>
<dbReference type="CDD" id="cd06572">
    <property type="entry name" value="Histidinol_dh"/>
    <property type="match status" value="1"/>
</dbReference>
<dbReference type="FunFam" id="3.40.50.1980:FF:000001">
    <property type="entry name" value="Histidinol dehydrogenase"/>
    <property type="match status" value="1"/>
</dbReference>
<dbReference type="FunFam" id="3.40.50.1980:FF:000026">
    <property type="entry name" value="Histidinol dehydrogenase"/>
    <property type="match status" value="1"/>
</dbReference>
<dbReference type="Gene3D" id="1.20.5.1300">
    <property type="match status" value="1"/>
</dbReference>
<dbReference type="Gene3D" id="3.40.50.1980">
    <property type="entry name" value="Nitrogenase molybdenum iron protein domain"/>
    <property type="match status" value="2"/>
</dbReference>
<dbReference type="HAMAP" id="MF_01024">
    <property type="entry name" value="HisD"/>
    <property type="match status" value="1"/>
</dbReference>
<dbReference type="InterPro" id="IPR016161">
    <property type="entry name" value="Ald_DH/histidinol_DH"/>
</dbReference>
<dbReference type="InterPro" id="IPR001692">
    <property type="entry name" value="Histidinol_DH_CS"/>
</dbReference>
<dbReference type="InterPro" id="IPR022695">
    <property type="entry name" value="Histidinol_DH_monofunct"/>
</dbReference>
<dbReference type="InterPro" id="IPR012131">
    <property type="entry name" value="Hstdl_DH"/>
</dbReference>
<dbReference type="NCBIfam" id="TIGR00069">
    <property type="entry name" value="hisD"/>
    <property type="match status" value="1"/>
</dbReference>
<dbReference type="PANTHER" id="PTHR21256:SF2">
    <property type="entry name" value="HISTIDINE BIOSYNTHESIS TRIFUNCTIONAL PROTEIN"/>
    <property type="match status" value="1"/>
</dbReference>
<dbReference type="PANTHER" id="PTHR21256">
    <property type="entry name" value="HISTIDINOL DEHYDROGENASE HDH"/>
    <property type="match status" value="1"/>
</dbReference>
<dbReference type="Pfam" id="PF00815">
    <property type="entry name" value="Histidinol_dh"/>
    <property type="match status" value="1"/>
</dbReference>
<dbReference type="PIRSF" id="PIRSF000099">
    <property type="entry name" value="Histidinol_dh"/>
    <property type="match status" value="1"/>
</dbReference>
<dbReference type="PRINTS" id="PR00083">
    <property type="entry name" value="HOLDHDRGNASE"/>
</dbReference>
<dbReference type="SUPFAM" id="SSF53720">
    <property type="entry name" value="ALDH-like"/>
    <property type="match status" value="1"/>
</dbReference>
<dbReference type="PROSITE" id="PS00611">
    <property type="entry name" value="HISOL_DEHYDROGENASE"/>
    <property type="match status" value="1"/>
</dbReference>
<comment type="function">
    <text evidence="1">Catalyzes the sequential NAD-dependent oxidations of L-histidinol to L-histidinaldehyde and then to L-histidine.</text>
</comment>
<comment type="catalytic activity">
    <reaction evidence="1">
        <text>L-histidinol + 2 NAD(+) + H2O = L-histidine + 2 NADH + 3 H(+)</text>
        <dbReference type="Rhea" id="RHEA:20641"/>
        <dbReference type="ChEBI" id="CHEBI:15377"/>
        <dbReference type="ChEBI" id="CHEBI:15378"/>
        <dbReference type="ChEBI" id="CHEBI:57540"/>
        <dbReference type="ChEBI" id="CHEBI:57595"/>
        <dbReference type="ChEBI" id="CHEBI:57699"/>
        <dbReference type="ChEBI" id="CHEBI:57945"/>
        <dbReference type="EC" id="1.1.1.23"/>
    </reaction>
</comment>
<comment type="cofactor">
    <cofactor evidence="1">
        <name>Zn(2+)</name>
        <dbReference type="ChEBI" id="CHEBI:29105"/>
    </cofactor>
    <text evidence="1">Binds 1 zinc ion per subunit.</text>
</comment>
<comment type="pathway">
    <text evidence="1">Amino-acid biosynthesis; L-histidine biosynthesis; L-histidine from 5-phospho-alpha-D-ribose 1-diphosphate: step 9/9.</text>
</comment>
<comment type="similarity">
    <text evidence="1">Belongs to the histidinol dehydrogenase family.</text>
</comment>
<gene>
    <name evidence="1" type="primary">hisD</name>
    <name type="ordered locus">DET0844</name>
</gene>
<proteinExistence type="inferred from homology"/>
<feature type="chain" id="PRO_0000135764" description="Histidinol dehydrogenase">
    <location>
        <begin position="1"/>
        <end position="436"/>
    </location>
</feature>
<feature type="active site" description="Proton acceptor" evidence="1">
    <location>
        <position position="334"/>
    </location>
</feature>
<feature type="active site" description="Proton acceptor" evidence="1">
    <location>
        <position position="335"/>
    </location>
</feature>
<feature type="binding site" evidence="1">
    <location>
        <position position="136"/>
    </location>
    <ligand>
        <name>NAD(+)</name>
        <dbReference type="ChEBI" id="CHEBI:57540"/>
    </ligand>
</feature>
<feature type="binding site" evidence="1">
    <location>
        <position position="198"/>
    </location>
    <ligand>
        <name>NAD(+)</name>
        <dbReference type="ChEBI" id="CHEBI:57540"/>
    </ligand>
</feature>
<feature type="binding site" evidence="1">
    <location>
        <position position="221"/>
    </location>
    <ligand>
        <name>NAD(+)</name>
        <dbReference type="ChEBI" id="CHEBI:57540"/>
    </ligand>
</feature>
<feature type="binding site" evidence="1">
    <location>
        <position position="244"/>
    </location>
    <ligand>
        <name>substrate</name>
    </ligand>
</feature>
<feature type="binding site" evidence="1">
    <location>
        <position position="266"/>
    </location>
    <ligand>
        <name>substrate</name>
    </ligand>
</feature>
<feature type="binding site" evidence="1">
    <location>
        <position position="266"/>
    </location>
    <ligand>
        <name>Zn(2+)</name>
        <dbReference type="ChEBI" id="CHEBI:29105"/>
    </ligand>
</feature>
<feature type="binding site" evidence="1">
    <location>
        <position position="269"/>
    </location>
    <ligand>
        <name>substrate</name>
    </ligand>
</feature>
<feature type="binding site" evidence="1">
    <location>
        <position position="269"/>
    </location>
    <ligand>
        <name>Zn(2+)</name>
        <dbReference type="ChEBI" id="CHEBI:29105"/>
    </ligand>
</feature>
<feature type="binding site" evidence="1">
    <location>
        <position position="335"/>
    </location>
    <ligand>
        <name>substrate</name>
    </ligand>
</feature>
<feature type="binding site" evidence="1">
    <location>
        <position position="368"/>
    </location>
    <ligand>
        <name>substrate</name>
    </ligand>
</feature>
<feature type="binding site" evidence="1">
    <location>
        <position position="368"/>
    </location>
    <ligand>
        <name>Zn(2+)</name>
        <dbReference type="ChEBI" id="CHEBI:29105"/>
    </ligand>
</feature>
<feature type="binding site" evidence="1">
    <location>
        <position position="422"/>
    </location>
    <ligand>
        <name>substrate</name>
    </ligand>
</feature>
<feature type="binding site" evidence="1">
    <location>
        <position position="427"/>
    </location>
    <ligand>
        <name>substrate</name>
    </ligand>
</feature>
<feature type="binding site" evidence="1">
    <location>
        <position position="427"/>
    </location>
    <ligand>
        <name>Zn(2+)</name>
        <dbReference type="ChEBI" id="CHEBI:29105"/>
    </ligand>
</feature>